<feature type="chain" id="PRO_0000037353" description="Non-structural protein 1-non-structural protein 3 fusion" evidence="1">
    <location>
        <begin position="1"/>
        <end position="500" status="greater than"/>
    </location>
</feature>
<feature type="domain" description="CoV Nsp1 globular" evidence="3">
    <location>
        <begin position="54"/>
        <end position="196"/>
    </location>
</feature>
<feature type="domain" description="Peptidase C16" evidence="2">
    <location>
        <begin position="352"/>
        <end position="500"/>
    </location>
</feature>
<feature type="zinc finger region" description="C4-type" evidence="2">
    <location>
        <begin position="466"/>
        <end position="494"/>
    </location>
</feature>
<feature type="active site" description="For PL1-PRO activity" evidence="2">
    <location>
        <position position="389"/>
    </location>
</feature>
<feature type="non-terminal residue">
    <location>
        <position position="500"/>
    </location>
</feature>
<accession>P26627</accession>
<sequence length="500" mass="55246">MAKMGKYGLGFKWAPEFPWMLPNASEKLGNPERSEEDGFCPSAAQEPKVKGKTLVNHVRVDCSRLPALECCVQSAIIRDIFVDEDPQKVEASTMMALQFGSAVLVKPSKRLSVQAWAKLGVLPKTPAMGLFKRFCLCNTRECVCDAHVAFQLFTVQPDGVCLGNGRFIGWFVPVTAIPEYAKQWLQPWSILLRKGGNKGSVTSGHSRRAVTMPVYDFNATDVVYADENQDDDADDPVVLVADTQEEDGVAKEQVDSADSEICVAHTVGQEMTEPDAVGSQTPIASAEETEVGEACDREGIAEVKATVCADALDACPDQVEAFDIEKVEDSILSELQTELNAPADKTYEDVLAFDAIYSETLSAFYAVPSDETHFKVCGFYSPAIERTNCWLRSTLIVMQSLPLEFKDLGMQKLWLSYKAGYDQCFVDKLVKSAPKSIILPQGGYVADFAYFFLSQCSFKVHANWRCLKCGMELKLQGLDAVFFYGDVVSHMCKCSFKAYF</sequence>
<evidence type="ECO:0000250" key="1"/>
<evidence type="ECO:0000255" key="2">
    <source>
        <dbReference type="PROSITE-ProRule" id="PRU00444"/>
    </source>
</evidence>
<evidence type="ECO:0000255" key="3">
    <source>
        <dbReference type="PROSITE-ProRule" id="PRU01307"/>
    </source>
</evidence>
<evidence type="ECO:0000305" key="4"/>
<organismHost>
    <name type="scientific">Mus musculus</name>
    <name type="common">Mouse</name>
    <dbReference type="NCBI Taxonomy" id="10090"/>
</organismHost>
<gene>
    <name type="primary">rep</name>
    <name type="ORF">1a-1b</name>
</gene>
<dbReference type="EMBL" id="M61144">
    <property type="protein sequence ID" value="AAA46451.1"/>
    <property type="molecule type" value="Genomic_RNA"/>
</dbReference>
<dbReference type="PIR" id="A36388">
    <property type="entry name" value="A36388"/>
</dbReference>
<dbReference type="MEROPS" id="C16.001"/>
<dbReference type="GO" id="GO:0008234">
    <property type="term" value="F:cysteine-type peptidase activity"/>
    <property type="evidence" value="ECO:0007669"/>
    <property type="project" value="UniProtKB-KW"/>
</dbReference>
<dbReference type="GO" id="GO:0008168">
    <property type="term" value="F:methyltransferase activity"/>
    <property type="evidence" value="ECO:0007669"/>
    <property type="project" value="UniProtKB-KW"/>
</dbReference>
<dbReference type="GO" id="GO:0003723">
    <property type="term" value="F:RNA binding"/>
    <property type="evidence" value="ECO:0007669"/>
    <property type="project" value="UniProtKB-KW"/>
</dbReference>
<dbReference type="GO" id="GO:0003968">
    <property type="term" value="F:RNA-directed RNA polymerase activity"/>
    <property type="evidence" value="ECO:0007669"/>
    <property type="project" value="InterPro"/>
</dbReference>
<dbReference type="GO" id="GO:0008270">
    <property type="term" value="F:zinc ion binding"/>
    <property type="evidence" value="ECO:0007669"/>
    <property type="project" value="UniProtKB-KW"/>
</dbReference>
<dbReference type="GO" id="GO:0032259">
    <property type="term" value="P:methylation"/>
    <property type="evidence" value="ECO:0007669"/>
    <property type="project" value="UniProtKB-KW"/>
</dbReference>
<dbReference type="GO" id="GO:0006508">
    <property type="term" value="P:proteolysis"/>
    <property type="evidence" value="ECO:0007669"/>
    <property type="project" value="UniProtKB-KW"/>
</dbReference>
<dbReference type="GO" id="GO:0039595">
    <property type="term" value="P:symbiont-mediated degradation of host mRNA"/>
    <property type="evidence" value="ECO:0007669"/>
    <property type="project" value="UniProtKB-KW"/>
</dbReference>
<dbReference type="GO" id="GO:0039657">
    <property type="term" value="P:symbiont-mediated suppression of host gene expression"/>
    <property type="evidence" value="ECO:0007669"/>
    <property type="project" value="UniProtKB-KW"/>
</dbReference>
<dbReference type="CDD" id="cd21879">
    <property type="entry name" value="MHV-like_Nsp1"/>
    <property type="match status" value="1"/>
</dbReference>
<dbReference type="FunFam" id="1.10.8.1190:FF:000003">
    <property type="entry name" value="Replicase polyprotein 1ab"/>
    <property type="match status" value="1"/>
</dbReference>
<dbReference type="Gene3D" id="1.10.8.1190">
    <property type="match status" value="1"/>
</dbReference>
<dbReference type="InterPro" id="IPR046443">
    <property type="entry name" value="a/bCoV_NSP1_glob"/>
</dbReference>
<dbReference type="InterPro" id="IPR022570">
    <property type="entry name" value="B-CoV_A_NSP1"/>
</dbReference>
<dbReference type="InterPro" id="IPR002705">
    <property type="entry name" value="Pept_C30/C16_B_coronavir"/>
</dbReference>
<dbReference type="InterPro" id="IPR013016">
    <property type="entry name" value="Peptidase_C16_CoV"/>
</dbReference>
<dbReference type="InterPro" id="IPR043178">
    <property type="entry name" value="PLpro_thumb_sf_CoV"/>
</dbReference>
<dbReference type="InterPro" id="IPR029063">
    <property type="entry name" value="SAM-dependent_MTases_sf"/>
</dbReference>
<dbReference type="Pfam" id="PF11963">
    <property type="entry name" value="B-CoV_A_NSP1"/>
    <property type="match status" value="1"/>
</dbReference>
<dbReference type="Pfam" id="PF01831">
    <property type="entry name" value="Peptidase_C16"/>
    <property type="match status" value="1"/>
</dbReference>
<dbReference type="SUPFAM" id="SSF53335">
    <property type="entry name" value="S-adenosyl-L-methionine-dependent methyltransferases"/>
    <property type="match status" value="1"/>
</dbReference>
<dbReference type="PROSITE" id="PS51962">
    <property type="entry name" value="COV_NSP1"/>
    <property type="match status" value="1"/>
</dbReference>
<dbReference type="PROSITE" id="PS51124">
    <property type="entry name" value="PEPTIDASE_C16"/>
    <property type="match status" value="1"/>
</dbReference>
<reference key="1">
    <citation type="journal article" date="1990" name="J. Virol.">
        <title>Analysis of efficiently packaged defective interfering RNAs of murine coronavirus: localization of a possible RNA-packaging signal.</title>
        <authorList>
            <person name="Makino S."/>
            <person name="Yokomori K."/>
            <person name="Lai M.M.C."/>
        </authorList>
    </citation>
    <scope>NUCLEOTIDE SEQUENCE [GENOMIC RNA]</scope>
</reference>
<comment type="function">
    <text>The replicase polyprotein of coronaviruses is a multifunctional protein: it contains the activities necessary for the transcription of negative stranded RNA, leader RNA, subgenomic mRNAs and progeny virion RNA as well as proteinases responsible for the cleavage of the polyprotein into functional products.</text>
</comment>
<comment type="function">
    <text evidence="1">The papain-like proteinase 1 (PL1-PRO) is responsible for the cleavages located at the N-terminus of the replicase polyprotein. Activity of PL1-PRO is strongly dependent on zinc (By similarity).</text>
</comment>
<comment type="function">
    <text evidence="1">Non-structural protein 1: binds to the 40S ribosomal subunit and inhibits host translation. The nsp1-40S ribosome complex further induces an endonucleolytic cleavage near the 5'UTR of host mRNAs, targeting them for degradation. By suppressing host gene expression, nsp1 facilitates efficient viral gene expression in infected cells and evasion from host immune response (By similarity).</text>
</comment>
<comment type="similarity">
    <text evidence="4">Belongs to the coronaviruses polyprotein 1ab family.</text>
</comment>
<comment type="caution">
    <text evidence="4">The genome of this defective strain consists of sequences derived from five discontinuous regions of the genome of the non-defective virus. Some proteins are thus truncated or absent.</text>
</comment>
<proteinExistence type="inferred from homology"/>
<organism>
    <name type="scientific">Murine coronavirus (strain defective JHM)</name>
    <name type="common">MHV</name>
    <name type="synonym">Murine hepatitis virus</name>
    <dbReference type="NCBI Taxonomy" id="11143"/>
    <lineage>
        <taxon>Viruses</taxon>
        <taxon>Riboviria</taxon>
        <taxon>Orthornavirae</taxon>
        <taxon>Pisuviricota</taxon>
        <taxon>Pisoniviricetes</taxon>
        <taxon>Nidovirales</taxon>
        <taxon>Cornidovirineae</taxon>
        <taxon>Coronaviridae</taxon>
        <taxon>Orthocoronavirinae</taxon>
        <taxon>Betacoronavirus</taxon>
        <taxon>Embecovirus</taxon>
        <taxon>Murine coronavirus</taxon>
    </lineage>
</organism>
<keyword id="KW-1132">Decay of host mRNAs by virus</keyword>
<keyword id="KW-1262">Eukaryotic host gene expression shutoff by virus</keyword>
<keyword id="KW-1193">Eukaryotic host translation shutoff by virus</keyword>
<keyword id="KW-1190">Host gene expression shutoff by virus</keyword>
<keyword id="KW-1192">Host mRNA suppression by virus</keyword>
<keyword id="KW-0945">Host-virus interaction</keyword>
<keyword id="KW-0378">Hydrolase</keyword>
<keyword id="KW-0479">Metal-binding</keyword>
<keyword id="KW-0489">Methyltransferase</keyword>
<keyword id="KW-0645">Protease</keyword>
<keyword id="KW-0694">RNA-binding</keyword>
<keyword id="KW-0788">Thiol protease</keyword>
<keyword id="KW-0808">Transferase</keyword>
<keyword id="KW-0862">Zinc</keyword>
<keyword id="KW-0863">Zinc-finger</keyword>
<protein>
    <recommendedName>
        <fullName>Replicase polyprotein 1ab</fullName>
        <shortName>pp1ab</shortName>
    </recommendedName>
    <alternativeName>
        <fullName>ORF1ab polyprotein</fullName>
    </alternativeName>
    <component>
        <recommendedName>
            <fullName>Non-structural protein 1-non-structural protein 3 fusion</fullName>
            <shortName>nsp1-nsp3 fusion</shortName>
        </recommendedName>
    </component>
</protein>
<name>R1AB_CVMJD</name>